<comment type="function">
    <text evidence="2">No toxicity is observed upon intracranial injection into mice and intrathorax injection into crickets.</text>
</comment>
<comment type="subcellular location">
    <subcellularLocation>
        <location>Secreted</location>
    </subcellularLocation>
</comment>
<comment type="tissue specificity">
    <text>Expressed by the venom gland.</text>
</comment>
<comment type="domain">
    <text evidence="3">The presence of a 'disulfide through disulfide knot' structurally defines this protein as a knottin.</text>
</comment>
<comment type="mass spectrometry"/>
<comment type="similarity">
    <text>Belongs to the neurotoxin 03 (Tx2) family. 03 subfamily.</text>
</comment>
<protein>
    <recommendedName>
        <fullName>U13-hexatoxin-Mg1a</fullName>
        <shortName>U13-HXTX-Mg1a</shortName>
    </recommendedName>
    <alternativeName>
        <fullName>Neurotoxin magi-12</fullName>
    </alternativeName>
</protein>
<feature type="signal peptide" evidence="1">
    <location>
        <begin position="1"/>
        <end position="17"/>
    </location>
</feature>
<feature type="propeptide" id="PRO_0000285711">
    <location>
        <begin position="18"/>
        <end position="52"/>
    </location>
</feature>
<feature type="chain" id="PRO_0000285712" description="U13-hexatoxin-Mg1a">
    <location>
        <begin position="53"/>
        <end position="124"/>
    </location>
</feature>
<feature type="disulfide bond" evidence="3">
    <location>
        <begin position="54"/>
        <end position="72"/>
    </location>
</feature>
<feature type="disulfide bond" evidence="3">
    <location>
        <begin position="65"/>
        <end position="78"/>
    </location>
</feature>
<feature type="disulfide bond" evidence="3">
    <location>
        <begin position="69"/>
        <end position="116"/>
    </location>
</feature>
<feature type="disulfide bond" evidence="3">
    <location>
        <begin position="71"/>
        <end position="87"/>
    </location>
</feature>
<keyword id="KW-0165">Cleavage on pair of basic residues</keyword>
<keyword id="KW-1015">Disulfide bond</keyword>
<keyword id="KW-0960">Knottin</keyword>
<keyword id="KW-0964">Secreted</keyword>
<keyword id="KW-0732">Signal</keyword>
<dbReference type="EMBL" id="AB121204">
    <property type="protein sequence ID" value="BAD13411.1"/>
    <property type="molecule type" value="mRNA"/>
</dbReference>
<dbReference type="ArachnoServer" id="AS000364">
    <property type="toxin name" value="U13-hexatoxin-Mg1a"/>
</dbReference>
<dbReference type="GO" id="GO:0005576">
    <property type="term" value="C:extracellular region"/>
    <property type="evidence" value="ECO:0007669"/>
    <property type="project" value="UniProtKB-SubCell"/>
</dbReference>
<organism>
    <name type="scientific">Macrothele gigas</name>
    <name type="common">Japanese funnel web spider</name>
    <dbReference type="NCBI Taxonomy" id="223896"/>
    <lineage>
        <taxon>Eukaryota</taxon>
        <taxon>Metazoa</taxon>
        <taxon>Ecdysozoa</taxon>
        <taxon>Arthropoda</taxon>
        <taxon>Chelicerata</taxon>
        <taxon>Arachnida</taxon>
        <taxon>Araneae</taxon>
        <taxon>Mygalomorphae</taxon>
        <taxon>Macrothelidae</taxon>
        <taxon>Macrothele</taxon>
    </lineage>
</organism>
<sequence>MKLSALVFVASVMLVAASPVKDVEEPVETHLAADLKTIEELAKYEEAAVQKRSCIVGSKNIGETCVASCQCCGATVRCIGEGTKGICNNYQTNNILGQILLYAKDTVVNTAGLLVCAQDLSEYE</sequence>
<reference key="1">
    <citation type="journal article" date="2004" name="Toxicon">
        <title>Rapid and efficient identification of cysteine-rich peptides by random screening of a venom gland cDNA library from the hexathelid spider Macrothele gigas.</title>
        <authorList>
            <person name="Satake H."/>
            <person name="Villegas E."/>
            <person name="Oshiro N."/>
            <person name="Terada K."/>
            <person name="Shinada T."/>
            <person name="Corzo G."/>
        </authorList>
    </citation>
    <scope>NUCLEOTIDE SEQUENCE [MRNA]</scope>
    <scope>FUNCTION</scope>
    <scope>MASS SPECTROMETRY</scope>
    <source>
        <tissue>Venom</tissue>
        <tissue>Venom gland</tissue>
    </source>
</reference>
<name>TX33A_MACGS</name>
<proteinExistence type="evidence at protein level"/>
<accession>Q75WG7</accession>
<evidence type="ECO:0000255" key="1"/>
<evidence type="ECO:0000269" key="2">
    <source>
    </source>
</evidence>
<evidence type="ECO:0000305" key="3"/>